<dbReference type="EMBL" id="CP001227">
    <property type="protein sequence ID" value="ACR47208.1"/>
    <property type="molecule type" value="Genomic_DNA"/>
</dbReference>
<dbReference type="RefSeq" id="WP_012736490.1">
    <property type="nucleotide sequence ID" value="NC_012730.1"/>
</dbReference>
<dbReference type="SMR" id="C4K0V7"/>
<dbReference type="KEGG" id="rpk:RPR_01655"/>
<dbReference type="HOGENOM" id="CLU_046483_2_0_5"/>
<dbReference type="Proteomes" id="UP000005015">
    <property type="component" value="Chromosome"/>
</dbReference>
<dbReference type="GO" id="GO:0022627">
    <property type="term" value="C:cytosolic small ribosomal subunit"/>
    <property type="evidence" value="ECO:0007669"/>
    <property type="project" value="TreeGrafter"/>
</dbReference>
<dbReference type="GO" id="GO:0003723">
    <property type="term" value="F:RNA binding"/>
    <property type="evidence" value="ECO:0007669"/>
    <property type="project" value="TreeGrafter"/>
</dbReference>
<dbReference type="GO" id="GO:0003735">
    <property type="term" value="F:structural constituent of ribosome"/>
    <property type="evidence" value="ECO:0007669"/>
    <property type="project" value="InterPro"/>
</dbReference>
<dbReference type="GO" id="GO:0006412">
    <property type="term" value="P:translation"/>
    <property type="evidence" value="ECO:0007669"/>
    <property type="project" value="UniProtKB-UniRule"/>
</dbReference>
<dbReference type="FunFam" id="3.30.230.10:FF:000001">
    <property type="entry name" value="30S ribosomal protein S9"/>
    <property type="match status" value="1"/>
</dbReference>
<dbReference type="Gene3D" id="3.30.230.10">
    <property type="match status" value="1"/>
</dbReference>
<dbReference type="HAMAP" id="MF_00532_B">
    <property type="entry name" value="Ribosomal_uS9_B"/>
    <property type="match status" value="1"/>
</dbReference>
<dbReference type="InterPro" id="IPR020568">
    <property type="entry name" value="Ribosomal_Su5_D2-typ_SF"/>
</dbReference>
<dbReference type="InterPro" id="IPR000754">
    <property type="entry name" value="Ribosomal_uS9"/>
</dbReference>
<dbReference type="InterPro" id="IPR023035">
    <property type="entry name" value="Ribosomal_uS9_bac/plastid"/>
</dbReference>
<dbReference type="InterPro" id="IPR020574">
    <property type="entry name" value="Ribosomal_uS9_CS"/>
</dbReference>
<dbReference type="InterPro" id="IPR014721">
    <property type="entry name" value="Ribsml_uS5_D2-typ_fold_subgr"/>
</dbReference>
<dbReference type="NCBIfam" id="NF001099">
    <property type="entry name" value="PRK00132.1"/>
    <property type="match status" value="1"/>
</dbReference>
<dbReference type="PANTHER" id="PTHR21569">
    <property type="entry name" value="RIBOSOMAL PROTEIN S9"/>
    <property type="match status" value="1"/>
</dbReference>
<dbReference type="PANTHER" id="PTHR21569:SF1">
    <property type="entry name" value="SMALL RIBOSOMAL SUBUNIT PROTEIN US9M"/>
    <property type="match status" value="1"/>
</dbReference>
<dbReference type="Pfam" id="PF00380">
    <property type="entry name" value="Ribosomal_S9"/>
    <property type="match status" value="1"/>
</dbReference>
<dbReference type="SUPFAM" id="SSF54211">
    <property type="entry name" value="Ribosomal protein S5 domain 2-like"/>
    <property type="match status" value="1"/>
</dbReference>
<dbReference type="PROSITE" id="PS00360">
    <property type="entry name" value="RIBOSOMAL_S9"/>
    <property type="match status" value="1"/>
</dbReference>
<name>RS9_RICPU</name>
<reference key="1">
    <citation type="journal article" date="2009" name="PLoS ONE">
        <title>Genome sequence of the endosymbiont Rickettsia peacockii and comparison with virulent Rickettsia rickettsii: identification of virulence factors.</title>
        <authorList>
            <person name="Felsheim R.F."/>
            <person name="Kurtti T.J."/>
            <person name="Munderloh U.G."/>
        </authorList>
    </citation>
    <scope>NUCLEOTIDE SEQUENCE [LARGE SCALE GENOMIC DNA]</scope>
    <source>
        <strain>Rustic</strain>
    </source>
</reference>
<sequence length="159" mass="17981">MPELKIKTEKVEKQLTKEPLVLKTPKEKIDNLGKFYATGKRKNAIARVWLKVGKGKIVVNKKTIAQYFPSETYVKTILQPFVLTKTIDQYDIICTVRGGGISGQKGAILHGISKALDKSAPDFHAILRKGGLLTRDSRVVERKKYGQRKARKKTQFSKR</sequence>
<comment type="similarity">
    <text evidence="1">Belongs to the universal ribosomal protein uS9 family.</text>
</comment>
<protein>
    <recommendedName>
        <fullName evidence="1">Small ribosomal subunit protein uS9</fullName>
    </recommendedName>
    <alternativeName>
        <fullName evidence="2">30S ribosomal protein S9</fullName>
    </alternativeName>
</protein>
<accession>C4K0V7</accession>
<organism>
    <name type="scientific">Rickettsia peacockii (strain Rustic)</name>
    <dbReference type="NCBI Taxonomy" id="562019"/>
    <lineage>
        <taxon>Bacteria</taxon>
        <taxon>Pseudomonadati</taxon>
        <taxon>Pseudomonadota</taxon>
        <taxon>Alphaproteobacteria</taxon>
        <taxon>Rickettsiales</taxon>
        <taxon>Rickettsiaceae</taxon>
        <taxon>Rickettsieae</taxon>
        <taxon>Rickettsia</taxon>
        <taxon>spotted fever group</taxon>
    </lineage>
</organism>
<feature type="chain" id="PRO_1000211844" description="Small ribosomal subunit protein uS9">
    <location>
        <begin position="1"/>
        <end position="159"/>
    </location>
</feature>
<gene>
    <name evidence="1" type="primary">rpsI</name>
    <name type="ordered locus">RPR_01655</name>
</gene>
<evidence type="ECO:0000255" key="1">
    <source>
        <dbReference type="HAMAP-Rule" id="MF_00532"/>
    </source>
</evidence>
<evidence type="ECO:0000305" key="2"/>
<proteinExistence type="inferred from homology"/>
<keyword id="KW-0687">Ribonucleoprotein</keyword>
<keyword id="KW-0689">Ribosomal protein</keyword>